<organism>
    <name type="scientific">Arabidopsis thaliana</name>
    <name type="common">Mouse-ear cress</name>
    <dbReference type="NCBI Taxonomy" id="3702"/>
    <lineage>
        <taxon>Eukaryota</taxon>
        <taxon>Viridiplantae</taxon>
        <taxon>Streptophyta</taxon>
        <taxon>Embryophyta</taxon>
        <taxon>Tracheophyta</taxon>
        <taxon>Spermatophyta</taxon>
        <taxon>Magnoliopsida</taxon>
        <taxon>eudicotyledons</taxon>
        <taxon>Gunneridae</taxon>
        <taxon>Pentapetalae</taxon>
        <taxon>rosids</taxon>
        <taxon>malvids</taxon>
        <taxon>Brassicales</taxon>
        <taxon>Brassicaceae</taxon>
        <taxon>Camelineae</taxon>
        <taxon>Arabidopsis</taxon>
    </lineage>
</organism>
<sequence>MAMSSGTLRISATLVSPYHHHHRNRLSLPSSSSKVDFTGFISNGVNSLETQKCTPGLAISRENTRGQVKVLARNTGDYELSPSPAEQEIESFLYNAINMGFFDRLNLAWKIIFPSHASRRSSNARIAKQRLKMILFSDRCDVSDEAKRKIVNNIIHALSDFVEIESEEKVQLNVSTDGDLGTIYSVTVPVRRVKPEYQDVDEAGTITNVEYKDTRDGSVDVRFDFYVPE</sequence>
<reference key="1">
    <citation type="journal article" date="2001" name="Plant Physiol.">
        <title>A chloroplast protein homologous to the eubacterial topological specificity factor minE plays a role in chloroplast division.</title>
        <authorList>
            <person name="Itoh R."/>
            <person name="Fujiwara M."/>
            <person name="Nagata N."/>
            <person name="Yoshida S."/>
        </authorList>
    </citation>
    <scope>NUCLEOTIDE SEQUENCE [MRNA]</scope>
    <scope>FUNCTION</scope>
    <scope>SUBCELLULAR LOCATION</scope>
    <scope>TISSUE SPECIFICITY</scope>
</reference>
<reference key="2">
    <citation type="journal article" date="2000" name="Nature">
        <title>Sequence and analysis of chromosome 1 of the plant Arabidopsis thaliana.</title>
        <authorList>
            <person name="Theologis A."/>
            <person name="Ecker J.R."/>
            <person name="Palm C.J."/>
            <person name="Federspiel N.A."/>
            <person name="Kaul S."/>
            <person name="White O."/>
            <person name="Alonso J."/>
            <person name="Altafi H."/>
            <person name="Araujo R."/>
            <person name="Bowman C.L."/>
            <person name="Brooks S.Y."/>
            <person name="Buehler E."/>
            <person name="Chan A."/>
            <person name="Chao Q."/>
            <person name="Chen H."/>
            <person name="Cheuk R.F."/>
            <person name="Chin C.W."/>
            <person name="Chung M.K."/>
            <person name="Conn L."/>
            <person name="Conway A.B."/>
            <person name="Conway A.R."/>
            <person name="Creasy T.H."/>
            <person name="Dewar K."/>
            <person name="Dunn P."/>
            <person name="Etgu P."/>
            <person name="Feldblyum T.V."/>
            <person name="Feng J.-D."/>
            <person name="Fong B."/>
            <person name="Fujii C.Y."/>
            <person name="Gill J.E."/>
            <person name="Goldsmith A.D."/>
            <person name="Haas B."/>
            <person name="Hansen N.F."/>
            <person name="Hughes B."/>
            <person name="Huizar L."/>
            <person name="Hunter J.L."/>
            <person name="Jenkins J."/>
            <person name="Johnson-Hopson C."/>
            <person name="Khan S."/>
            <person name="Khaykin E."/>
            <person name="Kim C.J."/>
            <person name="Koo H.L."/>
            <person name="Kremenetskaia I."/>
            <person name="Kurtz D.B."/>
            <person name="Kwan A."/>
            <person name="Lam B."/>
            <person name="Langin-Hooper S."/>
            <person name="Lee A."/>
            <person name="Lee J.M."/>
            <person name="Lenz C.A."/>
            <person name="Li J.H."/>
            <person name="Li Y.-P."/>
            <person name="Lin X."/>
            <person name="Liu S.X."/>
            <person name="Liu Z.A."/>
            <person name="Luros J.S."/>
            <person name="Maiti R."/>
            <person name="Marziali A."/>
            <person name="Militscher J."/>
            <person name="Miranda M."/>
            <person name="Nguyen M."/>
            <person name="Nierman W.C."/>
            <person name="Osborne B.I."/>
            <person name="Pai G."/>
            <person name="Peterson J."/>
            <person name="Pham P.K."/>
            <person name="Rizzo M."/>
            <person name="Rooney T."/>
            <person name="Rowley D."/>
            <person name="Sakano H."/>
            <person name="Salzberg S.L."/>
            <person name="Schwartz J.R."/>
            <person name="Shinn P."/>
            <person name="Southwick A.M."/>
            <person name="Sun H."/>
            <person name="Tallon L.J."/>
            <person name="Tambunga G."/>
            <person name="Toriumi M.J."/>
            <person name="Town C.D."/>
            <person name="Utterback T."/>
            <person name="Van Aken S."/>
            <person name="Vaysberg M."/>
            <person name="Vysotskaia V.S."/>
            <person name="Walker M."/>
            <person name="Wu D."/>
            <person name="Yu G."/>
            <person name="Fraser C.M."/>
            <person name="Venter J.C."/>
            <person name="Davis R.W."/>
        </authorList>
    </citation>
    <scope>NUCLEOTIDE SEQUENCE [LARGE SCALE GENOMIC DNA]</scope>
    <source>
        <strain>cv. Columbia</strain>
    </source>
</reference>
<reference key="3">
    <citation type="journal article" date="2017" name="Plant J.">
        <title>Araport11: a complete reannotation of the Arabidopsis thaliana reference genome.</title>
        <authorList>
            <person name="Cheng C.Y."/>
            <person name="Krishnakumar V."/>
            <person name="Chan A.P."/>
            <person name="Thibaud-Nissen F."/>
            <person name="Schobel S."/>
            <person name="Town C.D."/>
        </authorList>
    </citation>
    <scope>GENOME REANNOTATION</scope>
    <source>
        <strain>cv. Columbia</strain>
    </source>
</reference>
<reference key="4">
    <citation type="journal article" date="2003" name="Science">
        <title>Empirical analysis of transcriptional activity in the Arabidopsis genome.</title>
        <authorList>
            <person name="Yamada K."/>
            <person name="Lim J."/>
            <person name="Dale J.M."/>
            <person name="Chen H."/>
            <person name="Shinn P."/>
            <person name="Palm C.J."/>
            <person name="Southwick A.M."/>
            <person name="Wu H.C."/>
            <person name="Kim C.J."/>
            <person name="Nguyen M."/>
            <person name="Pham P.K."/>
            <person name="Cheuk R.F."/>
            <person name="Karlin-Newmann G."/>
            <person name="Liu S.X."/>
            <person name="Lam B."/>
            <person name="Sakano H."/>
            <person name="Wu T."/>
            <person name="Yu G."/>
            <person name="Miranda M."/>
            <person name="Quach H.L."/>
            <person name="Tripp M."/>
            <person name="Chang C.H."/>
            <person name="Lee J.M."/>
            <person name="Toriumi M.J."/>
            <person name="Chan M.M."/>
            <person name="Tang C.C."/>
            <person name="Onodera C.S."/>
            <person name="Deng J.M."/>
            <person name="Akiyama K."/>
            <person name="Ansari Y."/>
            <person name="Arakawa T."/>
            <person name="Banh J."/>
            <person name="Banno F."/>
            <person name="Bowser L."/>
            <person name="Brooks S.Y."/>
            <person name="Carninci P."/>
            <person name="Chao Q."/>
            <person name="Choy N."/>
            <person name="Enju A."/>
            <person name="Goldsmith A.D."/>
            <person name="Gurjal M."/>
            <person name="Hansen N.F."/>
            <person name="Hayashizaki Y."/>
            <person name="Johnson-Hopson C."/>
            <person name="Hsuan V.W."/>
            <person name="Iida K."/>
            <person name="Karnes M."/>
            <person name="Khan S."/>
            <person name="Koesema E."/>
            <person name="Ishida J."/>
            <person name="Jiang P.X."/>
            <person name="Jones T."/>
            <person name="Kawai J."/>
            <person name="Kamiya A."/>
            <person name="Meyers C."/>
            <person name="Nakajima M."/>
            <person name="Narusaka M."/>
            <person name="Seki M."/>
            <person name="Sakurai T."/>
            <person name="Satou M."/>
            <person name="Tamse R."/>
            <person name="Vaysberg M."/>
            <person name="Wallender E.K."/>
            <person name="Wong C."/>
            <person name="Yamamura Y."/>
            <person name="Yuan S."/>
            <person name="Shinozaki K."/>
            <person name="Davis R.W."/>
            <person name="Theologis A."/>
            <person name="Ecker J.R."/>
        </authorList>
    </citation>
    <scope>NUCLEOTIDE SEQUENCE [LARGE SCALE MRNA]</scope>
    <source>
        <strain>cv. Columbia</strain>
    </source>
</reference>
<reference key="5">
    <citation type="submission" date="2002-03" db="EMBL/GenBank/DDBJ databases">
        <title>Full-length cDNA from Arabidopsis thaliana.</title>
        <authorList>
            <person name="Brover V.V."/>
            <person name="Troukhan M.E."/>
            <person name="Alexandrov N.A."/>
            <person name="Lu Y.-P."/>
            <person name="Flavell R.B."/>
            <person name="Feldmann K.A."/>
        </authorList>
    </citation>
    <scope>NUCLEOTIDE SEQUENCE [LARGE SCALE MRNA]</scope>
</reference>
<reference key="6">
    <citation type="journal article" date="2002" name="Planta">
        <title>Overexpression of the Arabidopsis thaliana MinE1 bacterial division inhibitor homologue gene alters chloroplast size and morphology in transgenic Arabidopsis and tobacco plants.</title>
        <authorList>
            <person name="Reddy M.S."/>
            <person name="Dinkins R."/>
            <person name="Collins G.B."/>
        </authorList>
    </citation>
    <scope>FUNCTION</scope>
    <scope>SUBCELLULAR LOCATION</scope>
    <scope>TISSUE SPECIFICITY</scope>
</reference>
<reference key="7">
    <citation type="journal article" date="2002" name="Plant J.">
        <title>The topological specificity factor AtMinE1 is essential for correct plastid division site placement in Arabidopsis.</title>
        <authorList>
            <person name="Maple J."/>
            <person name="Chua N.-H."/>
            <person name="Moeller S.G."/>
        </authorList>
    </citation>
    <scope>FUNCTION</scope>
    <scope>SUBCELLULAR LOCATION</scope>
</reference>
<reference key="8">
    <citation type="journal article" date="2002" name="Physiol. Plantarum">
        <title>Reduced gravitropism in inflorescence stems and hypocotyls, but not roots, of Arabidopsis mutants with large plastids.</title>
        <authorList>
            <person name="Yamamoto K."/>
            <person name="Pyke K.A."/>
            <person name="Kiss J.Z."/>
        </authorList>
    </citation>
    <scope>FUNCTION</scope>
    <scope>DISRUPTION PHENOTYPE</scope>
    <source>
        <strain>cv. Columbia</strain>
        <strain>cv. Wassilewskija</strain>
    </source>
</reference>
<reference key="9">
    <citation type="journal article" date="2005" name="J. Biol. Chem.">
        <title>The plastid division protein AtMinD1 is a Ca2+-ATPase stimulated by AtMinE1.</title>
        <authorList>
            <person name="Aldridge C."/>
            <person name="Moeller S.G."/>
        </authorList>
    </citation>
    <scope>FUNCTION</scope>
    <scope>INTERACTION WITH MIND1</scope>
</reference>
<reference key="10">
    <citation type="journal article" date="2005" name="J. Exp. Bot.">
        <title>The molecular biology of plastid division in higher plants.</title>
        <authorList>
            <person name="Aldridge C."/>
            <person name="Maple J."/>
            <person name="Moeller S.G."/>
        </authorList>
    </citation>
    <scope>REVIEW</scope>
</reference>
<reference key="11">
    <citation type="journal article" date="2005" name="Plant J.">
        <title>Plastid division is mediated by combinatorial assembly of plastid division proteins.</title>
        <authorList>
            <person name="Maple J."/>
            <person name="Aldridge C."/>
            <person name="Moeller S.G."/>
        </authorList>
    </citation>
    <scope>HOMODIMERIZATION</scope>
    <scope>INTERACTION WITH MIND1</scope>
    <scope>SUBCELLULAR LOCATION</scope>
</reference>
<reference key="12">
    <citation type="journal article" date="2007" name="EMBO Rep.">
        <title>ARC3 is a stromal Z-ring accessory protein essential for plastid division.</title>
        <authorList>
            <person name="Maple J."/>
            <person name="Vojta L."/>
            <person name="Soll J."/>
            <person name="Moeller S.G."/>
        </authorList>
    </citation>
    <scope>INTERACTION WITH ARC3</scope>
    <source>
        <strain>cv. Columbia</strain>
    </source>
</reference>
<reference key="13">
    <citation type="journal article" date="2007" name="J. Cell Sci.">
        <title>Interdependency of formation and localisation of the Min complex controls symmetric plastid division.</title>
        <authorList>
            <person name="Maple J."/>
            <person name="Moeller S.G."/>
        </authorList>
    </citation>
    <scope>FUNCTION</scope>
    <scope>HOMODIMERIZATION</scope>
    <scope>INTERACTION WITH MIND1</scope>
    <scope>MUTAGENESIS OF ALA-124; ILE-126; ALA-127; LYS-128; GLN-129; ARG-130; LEU-131; LYS-132; ILE-134; LEU-135; ASP-138 AND ARG-139</scope>
    <scope>SUBCELLULAR LOCATION</scope>
</reference>
<reference key="14">
    <citation type="journal article" date="2007" name="Traffic">
        <title>Chloroplast division.</title>
        <authorList>
            <person name="Glynn J.M."/>
            <person name="Miyagishima S.-Y."/>
            <person name="Yoder D.W."/>
            <person name="Osteryoung K.W."/>
            <person name="Vitha S."/>
        </authorList>
    </citation>
    <scope>REVIEW</scope>
</reference>
<reference key="15">
    <citation type="journal article" date="2008" name="Plant Cell Physiol.">
        <title>The assembly of the FtsZ ring at the mid-chloroplast division site depends on a balance between the activities of AtMinE1 and ARC11/AtMinD1.</title>
        <authorList>
            <person name="Fujiwara M.T."/>
            <person name="Hashimoto H."/>
            <person name="Kazama Y."/>
            <person name="Abe T."/>
            <person name="Yoshida S."/>
            <person name="Sato N."/>
            <person name="Itoh R.D."/>
        </authorList>
    </citation>
    <scope>FUNCTION</scope>
    <scope>DISRUPTION PHENOTYPE</scope>
</reference>
<reference key="16">
    <citation type="journal article" date="2009" name="Biosci. Biotechnol. Biochem.">
        <title>Involvement of AtMinE1 in plastid morphogenesis in various tissues of Arabidopsis thaliana.</title>
        <authorList>
            <person name="Kojo K.H."/>
            <person name="Fujiwara M.T."/>
            <person name="Itoh R.D."/>
        </authorList>
    </citation>
    <scope>FUNCTION</scope>
    <scope>DISRUPTION PHENOTYPE</scope>
    <source>
        <strain>cv. Columbia</strain>
    </source>
</reference>
<reference key="17">
    <citation type="journal article" date="2009" name="Plant Cell Physiol.">
        <title>Live imaging of chloroplast FtsZ1 filaments, rings, spirals, and motile dot structures in the AtMinE1 mutant and overexpressor of Arabidopsis thaliana.</title>
        <authorList>
            <person name="Fujiwara M.T."/>
            <person name="Sekine K."/>
            <person name="Yamamoto Y.Y."/>
            <person name="Abe T."/>
            <person name="Sato N."/>
            <person name="Itoh R.D."/>
        </authorList>
    </citation>
    <scope>FUNCTION</scope>
    <scope>DISRUPTION PHENOTYPE</scope>
    <source>
        <strain>cv. Columbia</strain>
    </source>
</reference>
<reference key="18">
    <citation type="journal article" date="2013" name="PLoS ONE">
        <title>The chloroplast min system functions differentially in two specific nongreen plastids in Arabidopsis thaliana.</title>
        <authorList>
            <person name="Wang P."/>
            <person name="Zhang J."/>
            <person name="Su J."/>
            <person name="Wang P."/>
            <person name="Liu J."/>
            <person name="Liu B."/>
            <person name="Feng D."/>
            <person name="Wang J."/>
            <person name="Wang H."/>
        </authorList>
    </citation>
    <scope>FUNCTION</scope>
    <scope>DISRUPTION PHENOTYPE</scope>
    <source>
        <strain>cv. Columbia</strain>
        <strain>cv. Landsberg erecta</strain>
    </source>
</reference>
<reference key="19">
    <citation type="journal article" date="2015" name="Front. Plant Sci.">
        <title>The Arabidopsis minE mutation causes new plastid and FtsZ1 localization phenotypes in the leaf epidermis.</title>
        <authorList>
            <person name="Fujiwara M.T."/>
            <person name="Kojo K.H."/>
            <person name="Kazama Y."/>
            <person name="Sasaki S."/>
            <person name="Abe T."/>
            <person name="Itoh R.D."/>
        </authorList>
    </citation>
    <scope>FUNCTION</scope>
    <scope>DISRUPTION PHENOTYPE</scope>
    <scope>SUBCELLULAR LOCATION</scope>
    <source>
        <strain>cv. Columbia</strain>
        <strain>cv. Wassilewskija</strain>
    </source>
</reference>
<reference key="20">
    <citation type="journal article" date="2018" name="Plant Cell">
        <title>MCD1 associates with FtsZ filaments via the membrane-tethering protein ARC6 to guide chloroplast division.</title>
        <authorList>
            <person name="Chen L."/>
            <person name="Sun B."/>
            <person name="Gao W."/>
            <person name="Zhang Q.Y."/>
            <person name="Yuan H."/>
            <person name="Zhang M."/>
        </authorList>
    </citation>
    <scope>FUNCTION</scope>
    <scope>DISRUPTION PHENOTYPE</scope>
    <source>
        <strain>cv. Columbia</strain>
    </source>
</reference>
<feature type="transit peptide" description="Chloroplast" evidence="18">
    <location>
        <begin position="1"/>
        <end position="30"/>
    </location>
</feature>
<feature type="chain" id="PRO_0000406149" description="Cell division topological specificity factor homolog, chloroplastic">
    <location>
        <begin position="31"/>
        <end position="229"/>
    </location>
</feature>
<feature type="region of interest" description="Interaction with MIND1">
    <location>
        <begin position="35"/>
        <end position="141"/>
    </location>
</feature>
<feature type="region of interest" description="Homodimerization">
    <location>
        <begin position="142"/>
        <end position="169"/>
    </location>
</feature>
<feature type="mutagenesis site" description="Normal interaction with MIND1." evidence="8">
    <original>A</original>
    <variation>R</variation>
    <location>
        <position position="124"/>
    </location>
</feature>
<feature type="mutagenesis site" description="Normal interaction with MIND1." evidence="8">
    <original>I</original>
    <variation>R</variation>
    <location>
        <position position="126"/>
    </location>
</feature>
<feature type="mutagenesis site" description="Normal interaction with MIND1." evidence="8">
    <original>A</original>
    <variation>T</variation>
    <location>
        <position position="127"/>
    </location>
</feature>
<feature type="mutagenesis site" description="Normal interaction with MIND1." evidence="8">
    <original>K</original>
    <variation>A</variation>
    <location>
        <position position="128"/>
    </location>
</feature>
<feature type="mutagenesis site" description="Normal interaction with MIND1." evidence="8">
    <original>Q</original>
    <variation>A</variation>
    <location>
        <position position="129"/>
    </location>
</feature>
<feature type="mutagenesis site" description="Normal interaction with MIND1." evidence="8">
    <original>R</original>
    <variation>A</variation>
    <location>
        <position position="130"/>
    </location>
</feature>
<feature type="mutagenesis site" description="Abolished interaction with MIND1; when associated with R-134." evidence="8">
    <original>L</original>
    <variation>R</variation>
    <location>
        <position position="131"/>
    </location>
</feature>
<feature type="mutagenesis site" description="Normal interaction with MIND1." evidence="8">
    <original>K</original>
    <variation>R</variation>
    <location>
        <position position="132"/>
    </location>
</feature>
<feature type="mutagenesis site" description="Abolished interaction with MIND1; when associated with R-131." evidence="8">
    <original>I</original>
    <variation>R</variation>
    <location>
        <position position="134"/>
    </location>
</feature>
<feature type="mutagenesis site" description="Abolished interaction with MIND1." evidence="8">
    <original>L</original>
    <variation>E</variation>
    <location>
        <position position="135"/>
    </location>
</feature>
<feature type="mutagenesis site" description="Abolished interaction with MIND1." evidence="8">
    <original>D</original>
    <variation>I</variation>
    <location>
        <position position="138"/>
    </location>
</feature>
<feature type="mutagenesis site" description="Normal interaction with MIND1." evidence="8">
    <original>R</original>
    <variation>A</variation>
    <variation>K</variation>
    <location>
        <position position="139"/>
    </location>
</feature>
<comment type="function">
    <text evidence="1 2 3 4 5 8 9 10 11 12 13 14">Acts as a topological specificity factor during plastid division and specify plastid constriction sites (such as the Z-ring) in a MCD1-dependent manner (PubMed:23936263, PubMed:29967285). Especially involved in epidermal plastids division in a FTSZ1-dependent manner (PubMed:26500667). Required for the proper formation of FtsZ rings at the division site in nongreen plastids (e.g. etioplasts) (PubMed:23936263). May contribute to gravitropism in stems and hypocotyls. Stimulates MIND1 ATPase activity. In cooperation with MIND1, prevents FtsZ ring formation anywhere outside of the mid-plastids.</text>
</comment>
<comment type="subunit">
    <text evidence="5 6 7 8">Homodimer. Interacts with MIND1. These interactions are required for proper intraplastidic localization. Binds to ARC3.</text>
</comment>
<comment type="interaction">
    <interactant intactId="EBI-2119860">
        <id>Q9C4Z7</id>
    </interactant>
    <interactant intactId="EBI-2367605">
        <id>Q6F6B5</id>
        <label>ARC3</label>
    </interactant>
    <organismsDiffer>false</organismsDiffer>
    <experiments>3</experiments>
</comment>
<comment type="interaction">
    <interactant intactId="EBI-2119860">
        <id>Q9C4Z7</id>
    </interactant>
    <interactant intactId="EBI-2119758">
        <id>Q9MBA2</id>
        <label>MIND1</label>
    </interactant>
    <organismsDiffer>false</organismsDiffer>
    <experiments>6</experiments>
</comment>
<comment type="interaction">
    <interactant intactId="EBI-2119860">
        <id>Q9C4Z7</id>
    </interactant>
    <interactant intactId="EBI-2119860">
        <id>Q9C4Z7</id>
        <label>MINE1</label>
    </interactant>
    <organismsDiffer>false</organismsDiffer>
    <experiments>3</experiments>
</comment>
<comment type="subcellular location">
    <subcellularLocation>
        <location evidence="1 3 4 6 8 13">Plastid</location>
        <location evidence="1 3 4 6 8 13">Chloroplast</location>
    </subcellularLocation>
    <text>Dynamic protein that is restricted to a single spot at one end of chloroplasts or as two spots in close proximity normally towards one end of the chloroplast. Seems attached to membranes.</text>
</comment>
<comment type="tissue specificity">
    <text evidence="1 3">Expressed in green tissues, especially at the shoot apex. Also present in leaves, stems, buds, and flowers, especially in sepals, siliques (tip and base), and anthers (mostly in pollen grains).</text>
</comment>
<comment type="disruption phenotype">
    <text evidence="2 9 10 11 12 13 14">Only one or two large plastids (all type of plastid) in each plastid containing cells (PubMed:23936263). Impaired gravitropism of inflorescence stems and hypocotyls, but not of roots. Wide variation in size and shape of epidermal plastids, occasionally displaying grape-like morphology, associated with a disturbed localization of FTSZ1 ring (PubMed:26500667). Severe inhibition of plastid division, producing motile disorganized dots and short filaments of FtsZ (PubMed:29967285). Reduced number of enlarged etioplasts in cotyledons associated with fragmented FtsZ filaments (PubMed:23936263). Altered localization of MCD1 and MinD1 in puncta on the envelope membranes of giant chloroplasts (PubMed:29967285). The mcd1 arc12 double mutant contains a heterogeneous population of chloroplasts, including some with multiple membrane constrictions associated with an organization of FtsZ1 in multiple rings similar to those observed in mcd1 single mutants (PubMed:29967285).</text>
</comment>
<comment type="similarity">
    <text evidence="18">Belongs to the MinE family.</text>
</comment>
<dbReference type="EMBL" id="AB046117">
    <property type="protein sequence ID" value="BAB79236.1"/>
    <property type="molecule type" value="mRNA"/>
</dbReference>
<dbReference type="EMBL" id="AC018364">
    <property type="protein sequence ID" value="AAG52489.1"/>
    <property type="molecule type" value="Genomic_DNA"/>
</dbReference>
<dbReference type="EMBL" id="AC073178">
    <property type="protein sequence ID" value="AAG60109.1"/>
    <property type="molecule type" value="Genomic_DNA"/>
</dbReference>
<dbReference type="EMBL" id="CP002684">
    <property type="protein sequence ID" value="AEE34918.1"/>
    <property type="molecule type" value="Genomic_DNA"/>
</dbReference>
<dbReference type="EMBL" id="BT002897">
    <property type="protein sequence ID" value="AAO22713.1"/>
    <property type="molecule type" value="mRNA"/>
</dbReference>
<dbReference type="EMBL" id="BT004467">
    <property type="protein sequence ID" value="AAO42461.1"/>
    <property type="molecule type" value="mRNA"/>
</dbReference>
<dbReference type="EMBL" id="AY088828">
    <property type="protein sequence ID" value="AAM67135.1"/>
    <property type="molecule type" value="mRNA"/>
</dbReference>
<dbReference type="RefSeq" id="NP_564964.1">
    <property type="nucleotide sequence ID" value="NM_105606.4"/>
</dbReference>
<dbReference type="BioGRID" id="28492">
    <property type="interactions" value="2"/>
</dbReference>
<dbReference type="FunCoup" id="Q9C4Z7">
    <property type="interactions" value="1887"/>
</dbReference>
<dbReference type="IntAct" id="Q9C4Z7">
    <property type="interactions" value="2"/>
</dbReference>
<dbReference type="MINT" id="Q9C4Z7"/>
<dbReference type="STRING" id="3702.Q9C4Z7"/>
<dbReference type="PaxDb" id="3702-AT1G69390.1"/>
<dbReference type="ProteomicsDB" id="250701"/>
<dbReference type="EnsemblPlants" id="AT1G69390.1">
    <property type="protein sequence ID" value="AT1G69390.1"/>
    <property type="gene ID" value="AT1G69390"/>
</dbReference>
<dbReference type="GeneID" id="843271"/>
<dbReference type="Gramene" id="AT1G69390.1">
    <property type="protein sequence ID" value="AT1G69390.1"/>
    <property type="gene ID" value="AT1G69390"/>
</dbReference>
<dbReference type="KEGG" id="ath:AT1G69390"/>
<dbReference type="Araport" id="AT1G69390"/>
<dbReference type="TAIR" id="AT1G69390">
    <property type="gene designation" value="MINE1"/>
</dbReference>
<dbReference type="eggNOG" id="ENOG502QVF0">
    <property type="taxonomic scope" value="Eukaryota"/>
</dbReference>
<dbReference type="HOGENOM" id="CLU_104395_0_0_1"/>
<dbReference type="InParanoid" id="Q9C4Z7"/>
<dbReference type="OMA" id="NWAWNIL"/>
<dbReference type="OrthoDB" id="1606438at2759"/>
<dbReference type="PhylomeDB" id="Q9C4Z7"/>
<dbReference type="PRO" id="PR:Q9C4Z7"/>
<dbReference type="Proteomes" id="UP000006548">
    <property type="component" value="Chromosome 1"/>
</dbReference>
<dbReference type="ExpressionAtlas" id="Q9C4Z7">
    <property type="expression patterns" value="baseline and differential"/>
</dbReference>
<dbReference type="GO" id="GO:0009507">
    <property type="term" value="C:chloroplast"/>
    <property type="evidence" value="ECO:0000314"/>
    <property type="project" value="UniProtKB"/>
</dbReference>
<dbReference type="GO" id="GO:0005739">
    <property type="term" value="C:mitochondrion"/>
    <property type="evidence" value="ECO:0007005"/>
    <property type="project" value="TAIR"/>
</dbReference>
<dbReference type="GO" id="GO:0051117">
    <property type="term" value="F:ATPase binding"/>
    <property type="evidence" value="ECO:0000353"/>
    <property type="project" value="UniProtKB"/>
</dbReference>
<dbReference type="GO" id="GO:0042802">
    <property type="term" value="F:identical protein binding"/>
    <property type="evidence" value="ECO:0000353"/>
    <property type="project" value="IntAct"/>
</dbReference>
<dbReference type="GO" id="GO:0051301">
    <property type="term" value="P:cell division"/>
    <property type="evidence" value="ECO:0007669"/>
    <property type="project" value="InterPro"/>
</dbReference>
<dbReference type="GO" id="GO:0010020">
    <property type="term" value="P:chloroplast fission"/>
    <property type="evidence" value="ECO:0000315"/>
    <property type="project" value="UniProtKB"/>
</dbReference>
<dbReference type="GO" id="GO:0032955">
    <property type="term" value="P:regulation of division septum assembly"/>
    <property type="evidence" value="ECO:0007669"/>
    <property type="project" value="InterPro"/>
</dbReference>
<dbReference type="FunFam" id="3.30.1070.10:FF:000002">
    <property type="entry name" value="Cell division topological specificity factor-like, chloroplastic"/>
    <property type="match status" value="1"/>
</dbReference>
<dbReference type="Gene3D" id="3.30.1070.10">
    <property type="entry name" value="Cell division topological specificity factor MinE"/>
    <property type="match status" value="1"/>
</dbReference>
<dbReference type="InterPro" id="IPR005527">
    <property type="entry name" value="MinE"/>
</dbReference>
<dbReference type="InterPro" id="IPR036707">
    <property type="entry name" value="MinE_sf"/>
</dbReference>
<dbReference type="PANTHER" id="PTHR33404">
    <property type="entry name" value="CELL DIVISION TOPOLOGICAL SPECIFICITY FACTOR HOMOLOG, CHLOROPLASTIC"/>
    <property type="match status" value="1"/>
</dbReference>
<dbReference type="PANTHER" id="PTHR33404:SF2">
    <property type="entry name" value="CELL DIVISION TOPOLOGICAL SPECIFICITY FACTOR HOMOLOG, CHLOROPLASTIC"/>
    <property type="match status" value="1"/>
</dbReference>
<dbReference type="Pfam" id="PF03776">
    <property type="entry name" value="MinE"/>
    <property type="match status" value="1"/>
</dbReference>
<gene>
    <name evidence="15" type="primary">MINE1</name>
    <name evidence="16 17" type="synonym">ARC12</name>
    <name evidence="19" type="ordered locus">At1g69390</name>
    <name evidence="21" type="ORF">F10D13.22</name>
    <name evidence="20" type="ORF">F23O10.25</name>
</gene>
<evidence type="ECO:0000269" key="1">
    <source>
    </source>
</evidence>
<evidence type="ECO:0000269" key="2">
    <source>
    </source>
</evidence>
<evidence type="ECO:0000269" key="3">
    <source>
    </source>
</evidence>
<evidence type="ECO:0000269" key="4">
    <source>
    </source>
</evidence>
<evidence type="ECO:0000269" key="5">
    <source>
    </source>
</evidence>
<evidence type="ECO:0000269" key="6">
    <source>
    </source>
</evidence>
<evidence type="ECO:0000269" key="7">
    <source>
    </source>
</evidence>
<evidence type="ECO:0000269" key="8">
    <source>
    </source>
</evidence>
<evidence type="ECO:0000269" key="9">
    <source>
    </source>
</evidence>
<evidence type="ECO:0000269" key="10">
    <source>
    </source>
</evidence>
<evidence type="ECO:0000269" key="11">
    <source>
    </source>
</evidence>
<evidence type="ECO:0000269" key="12">
    <source>
    </source>
</evidence>
<evidence type="ECO:0000269" key="13">
    <source>
    </source>
</evidence>
<evidence type="ECO:0000269" key="14">
    <source>
    </source>
</evidence>
<evidence type="ECO:0000303" key="15">
    <source>
    </source>
</evidence>
<evidence type="ECO:0000303" key="16">
    <source>
    </source>
</evidence>
<evidence type="ECO:0000303" key="17">
    <source>
    </source>
</evidence>
<evidence type="ECO:0000305" key="18"/>
<evidence type="ECO:0000312" key="19">
    <source>
        <dbReference type="Araport" id="AT1G69390"/>
    </source>
</evidence>
<evidence type="ECO:0000312" key="20">
    <source>
        <dbReference type="EMBL" id="AAG52489.1"/>
    </source>
</evidence>
<evidence type="ECO:0000312" key="21">
    <source>
        <dbReference type="EMBL" id="AAG60109.1"/>
    </source>
</evidence>
<keyword id="KW-0150">Chloroplast</keyword>
<keyword id="KW-0934">Plastid</keyword>
<keyword id="KW-1185">Reference proteome</keyword>
<keyword id="KW-0809">Transit peptide</keyword>
<accession>Q9C4Z7</accession>
<protein>
    <recommendedName>
        <fullName evidence="15">Cell division topological specificity factor homolog, chloroplastic</fullName>
        <shortName evidence="15">AtMinE1</shortName>
    </recommendedName>
    <alternativeName>
        <fullName evidence="16 17">Protein ACCUMULATION AND REPLICATION OF CHLOROPLASTS 12</fullName>
    </alternativeName>
</protein>
<name>MINE1_ARATH</name>
<proteinExistence type="evidence at protein level"/>